<organism>
    <name type="scientific">Clostridium botulinum (strain Eklund 17B / Type B)</name>
    <dbReference type="NCBI Taxonomy" id="935198"/>
    <lineage>
        <taxon>Bacteria</taxon>
        <taxon>Bacillati</taxon>
        <taxon>Bacillota</taxon>
        <taxon>Clostridia</taxon>
        <taxon>Eubacteriales</taxon>
        <taxon>Clostridiaceae</taxon>
        <taxon>Clostridium</taxon>
    </lineage>
</organism>
<reference key="1">
    <citation type="submission" date="2008-04" db="EMBL/GenBank/DDBJ databases">
        <title>Complete sequence of Clostridium botulinum strain Eklund.</title>
        <authorList>
            <person name="Brinkac L.M."/>
            <person name="Brown J.L."/>
            <person name="Bruce D."/>
            <person name="Detter C."/>
            <person name="Munk C."/>
            <person name="Smith L.A."/>
            <person name="Smith T.J."/>
            <person name="Sutton G."/>
            <person name="Brettin T.S."/>
        </authorList>
    </citation>
    <scope>NUCLEOTIDE SEQUENCE [LARGE SCALE GENOMIC DNA]</scope>
    <source>
        <strain>Eklund 17B / Type B</strain>
    </source>
</reference>
<feature type="chain" id="PRO_1000192603" description="Ribosomal protein L11 methyltransferase">
    <location>
        <begin position="1"/>
        <end position="313"/>
    </location>
</feature>
<feature type="binding site" evidence="1">
    <location>
        <position position="164"/>
    </location>
    <ligand>
        <name>S-adenosyl-L-methionine</name>
        <dbReference type="ChEBI" id="CHEBI:59789"/>
    </ligand>
</feature>
<feature type="binding site" evidence="1">
    <location>
        <position position="185"/>
    </location>
    <ligand>
        <name>S-adenosyl-L-methionine</name>
        <dbReference type="ChEBI" id="CHEBI:59789"/>
    </ligand>
</feature>
<feature type="binding site" evidence="1">
    <location>
        <position position="207"/>
    </location>
    <ligand>
        <name>S-adenosyl-L-methionine</name>
        <dbReference type="ChEBI" id="CHEBI:59789"/>
    </ligand>
</feature>
<feature type="binding site" evidence="1">
    <location>
        <position position="249"/>
    </location>
    <ligand>
        <name>S-adenosyl-L-methionine</name>
        <dbReference type="ChEBI" id="CHEBI:59789"/>
    </ligand>
</feature>
<sequence length="313" mass="34410">MNGVWIEVRVITSCEAIEPISGIFYGLNSQGVAVEDPNDLLTRDQGPLTWDFADINVLEHKGEFAVVKAYFSGDDDLEKIVSITKEKVKEIQEMGIDIGKGIVECDKIKEEDWANNWKKYYKPSNITDRIVVKPMWEEYSPKNEELVIELDPGMAFGTGTHETTRMCVKALEKYVEHDSTVFDVGCGSGILAIAAAKLGAKLALGVDLDPVAVESAKENVGLNDLDNIEILEGNLLDVIDGKADIVVANIIAEIICILTDDVSKALNKGGLFITSGIIHERVDMVTSKLDECGFEVMEVNKDGEWNCIVAKLK</sequence>
<keyword id="KW-0963">Cytoplasm</keyword>
<keyword id="KW-0489">Methyltransferase</keyword>
<keyword id="KW-0949">S-adenosyl-L-methionine</keyword>
<keyword id="KW-0808">Transferase</keyword>
<protein>
    <recommendedName>
        <fullName evidence="1">Ribosomal protein L11 methyltransferase</fullName>
        <shortName evidence="1">L11 Mtase</shortName>
        <ecNumber evidence="1">2.1.1.-</ecNumber>
    </recommendedName>
</protein>
<gene>
    <name evidence="1" type="primary">prmA</name>
    <name type="ordered locus">CLL_A0895</name>
</gene>
<accession>B2TM01</accession>
<name>PRMA_CLOBB</name>
<comment type="function">
    <text evidence="1">Methylates ribosomal protein L11.</text>
</comment>
<comment type="catalytic activity">
    <reaction evidence="1">
        <text>L-lysyl-[protein] + 3 S-adenosyl-L-methionine = N(6),N(6),N(6)-trimethyl-L-lysyl-[protein] + 3 S-adenosyl-L-homocysteine + 3 H(+)</text>
        <dbReference type="Rhea" id="RHEA:54192"/>
        <dbReference type="Rhea" id="RHEA-COMP:9752"/>
        <dbReference type="Rhea" id="RHEA-COMP:13826"/>
        <dbReference type="ChEBI" id="CHEBI:15378"/>
        <dbReference type="ChEBI" id="CHEBI:29969"/>
        <dbReference type="ChEBI" id="CHEBI:57856"/>
        <dbReference type="ChEBI" id="CHEBI:59789"/>
        <dbReference type="ChEBI" id="CHEBI:61961"/>
    </reaction>
</comment>
<comment type="subcellular location">
    <subcellularLocation>
        <location evidence="1">Cytoplasm</location>
    </subcellularLocation>
</comment>
<comment type="similarity">
    <text evidence="1">Belongs to the methyltransferase superfamily. PrmA family.</text>
</comment>
<dbReference type="EC" id="2.1.1.-" evidence="1"/>
<dbReference type="EMBL" id="CP001056">
    <property type="protein sequence ID" value="ACD23895.1"/>
    <property type="molecule type" value="Genomic_DNA"/>
</dbReference>
<dbReference type="SMR" id="B2TM01"/>
<dbReference type="KEGG" id="cbk:CLL_A0895"/>
<dbReference type="PATRIC" id="fig|935198.13.peg.845"/>
<dbReference type="HOGENOM" id="CLU_049382_0_1_9"/>
<dbReference type="Proteomes" id="UP000001195">
    <property type="component" value="Chromosome"/>
</dbReference>
<dbReference type="GO" id="GO:0005737">
    <property type="term" value="C:cytoplasm"/>
    <property type="evidence" value="ECO:0007669"/>
    <property type="project" value="UniProtKB-SubCell"/>
</dbReference>
<dbReference type="GO" id="GO:0016279">
    <property type="term" value="F:protein-lysine N-methyltransferase activity"/>
    <property type="evidence" value="ECO:0007669"/>
    <property type="project" value="RHEA"/>
</dbReference>
<dbReference type="GO" id="GO:0032259">
    <property type="term" value="P:methylation"/>
    <property type="evidence" value="ECO:0007669"/>
    <property type="project" value="UniProtKB-KW"/>
</dbReference>
<dbReference type="CDD" id="cd02440">
    <property type="entry name" value="AdoMet_MTases"/>
    <property type="match status" value="1"/>
</dbReference>
<dbReference type="Gene3D" id="3.40.50.150">
    <property type="entry name" value="Vaccinia Virus protein VP39"/>
    <property type="match status" value="1"/>
</dbReference>
<dbReference type="HAMAP" id="MF_00735">
    <property type="entry name" value="Methyltr_PrmA"/>
    <property type="match status" value="1"/>
</dbReference>
<dbReference type="InterPro" id="IPR050078">
    <property type="entry name" value="Ribosomal_L11_MeTrfase_PrmA"/>
</dbReference>
<dbReference type="InterPro" id="IPR004498">
    <property type="entry name" value="Ribosomal_PrmA_MeTrfase"/>
</dbReference>
<dbReference type="InterPro" id="IPR029063">
    <property type="entry name" value="SAM-dependent_MTases_sf"/>
</dbReference>
<dbReference type="NCBIfam" id="TIGR00406">
    <property type="entry name" value="prmA"/>
    <property type="match status" value="1"/>
</dbReference>
<dbReference type="PANTHER" id="PTHR43648">
    <property type="entry name" value="ELECTRON TRANSFER FLAVOPROTEIN BETA SUBUNIT LYSINE METHYLTRANSFERASE"/>
    <property type="match status" value="1"/>
</dbReference>
<dbReference type="PANTHER" id="PTHR43648:SF1">
    <property type="entry name" value="ELECTRON TRANSFER FLAVOPROTEIN BETA SUBUNIT LYSINE METHYLTRANSFERASE"/>
    <property type="match status" value="1"/>
</dbReference>
<dbReference type="Pfam" id="PF06325">
    <property type="entry name" value="PrmA"/>
    <property type="match status" value="1"/>
</dbReference>
<dbReference type="PIRSF" id="PIRSF000401">
    <property type="entry name" value="RPL11_MTase"/>
    <property type="match status" value="1"/>
</dbReference>
<dbReference type="SUPFAM" id="SSF53335">
    <property type="entry name" value="S-adenosyl-L-methionine-dependent methyltransferases"/>
    <property type="match status" value="1"/>
</dbReference>
<evidence type="ECO:0000255" key="1">
    <source>
        <dbReference type="HAMAP-Rule" id="MF_00735"/>
    </source>
</evidence>
<proteinExistence type="inferred from homology"/>